<protein>
    <recommendedName>
        <fullName evidence="1">Ribosomal RNA large subunit methyltransferase H</fullName>
        <ecNumber evidence="1">2.1.1.177</ecNumber>
    </recommendedName>
    <alternativeName>
        <fullName evidence="1">23S rRNA (pseudouridine1915-N3)-methyltransferase</fullName>
    </alternativeName>
    <alternativeName>
        <fullName evidence="1">23S rRNA m3Psi1915 methyltransferase</fullName>
    </alternativeName>
    <alternativeName>
        <fullName evidence="1">rRNA (pseudouridine-N3-)-methyltransferase RlmH</fullName>
    </alternativeName>
</protein>
<name>RLMH_CLOK5</name>
<proteinExistence type="inferred from homology"/>
<dbReference type="EC" id="2.1.1.177" evidence="1"/>
<dbReference type="EMBL" id="CP000673">
    <property type="protein sequence ID" value="EDK34340.1"/>
    <property type="molecule type" value="Genomic_DNA"/>
</dbReference>
<dbReference type="RefSeq" id="WP_012102672.1">
    <property type="nucleotide sequence ID" value="NC_009706.1"/>
</dbReference>
<dbReference type="SMR" id="A5MZP4"/>
<dbReference type="STRING" id="431943.CKL_2328"/>
<dbReference type="KEGG" id="ckl:CKL_2328"/>
<dbReference type="eggNOG" id="COG1576">
    <property type="taxonomic scope" value="Bacteria"/>
</dbReference>
<dbReference type="HOGENOM" id="CLU_100552_0_0_9"/>
<dbReference type="Proteomes" id="UP000002411">
    <property type="component" value="Chromosome"/>
</dbReference>
<dbReference type="GO" id="GO:0005737">
    <property type="term" value="C:cytoplasm"/>
    <property type="evidence" value="ECO:0007669"/>
    <property type="project" value="UniProtKB-SubCell"/>
</dbReference>
<dbReference type="GO" id="GO:0070038">
    <property type="term" value="F:rRNA (pseudouridine-N3-)-methyltransferase activity"/>
    <property type="evidence" value="ECO:0007669"/>
    <property type="project" value="UniProtKB-UniRule"/>
</dbReference>
<dbReference type="CDD" id="cd18081">
    <property type="entry name" value="RlmH-like"/>
    <property type="match status" value="1"/>
</dbReference>
<dbReference type="Gene3D" id="3.40.1280.10">
    <property type="match status" value="1"/>
</dbReference>
<dbReference type="HAMAP" id="MF_00658">
    <property type="entry name" value="23SrRNA_methyltr_H"/>
    <property type="match status" value="1"/>
</dbReference>
<dbReference type="InterPro" id="IPR029028">
    <property type="entry name" value="Alpha/beta_knot_MTases"/>
</dbReference>
<dbReference type="InterPro" id="IPR003742">
    <property type="entry name" value="RlmH-like"/>
</dbReference>
<dbReference type="InterPro" id="IPR029026">
    <property type="entry name" value="tRNA_m1G_MTases_N"/>
</dbReference>
<dbReference type="NCBIfam" id="NF000985">
    <property type="entry name" value="PRK00103.1-3"/>
    <property type="match status" value="1"/>
</dbReference>
<dbReference type="NCBIfam" id="TIGR00246">
    <property type="entry name" value="tRNA_RlmH_YbeA"/>
    <property type="match status" value="1"/>
</dbReference>
<dbReference type="PANTHER" id="PTHR33603">
    <property type="entry name" value="METHYLTRANSFERASE"/>
    <property type="match status" value="1"/>
</dbReference>
<dbReference type="PANTHER" id="PTHR33603:SF1">
    <property type="entry name" value="RIBOSOMAL RNA LARGE SUBUNIT METHYLTRANSFERASE H"/>
    <property type="match status" value="1"/>
</dbReference>
<dbReference type="Pfam" id="PF02590">
    <property type="entry name" value="SPOUT_MTase"/>
    <property type="match status" value="1"/>
</dbReference>
<dbReference type="PIRSF" id="PIRSF004505">
    <property type="entry name" value="MT_bac"/>
    <property type="match status" value="1"/>
</dbReference>
<dbReference type="SUPFAM" id="SSF75217">
    <property type="entry name" value="alpha/beta knot"/>
    <property type="match status" value="1"/>
</dbReference>
<sequence length="159" mass="18229">MNITIIAVGKLKEKYLKAAVEEYSKRLSRYCRLNIIEVQDEKTPDNASSSEQDIIKEKEGRRILKYINDNMYVVALDLKGSMMGSEEFSKFVGNLGLSGKSNIAFIIGGSLGISSEILKRADYKLCFSKMTFPHQLFRIMLLEQIYRGFRIMKGEPYHK</sequence>
<reference key="1">
    <citation type="journal article" date="2008" name="Proc. Natl. Acad. Sci. U.S.A.">
        <title>The genome of Clostridium kluyveri, a strict anaerobe with unique metabolic features.</title>
        <authorList>
            <person name="Seedorf H."/>
            <person name="Fricke W.F."/>
            <person name="Veith B."/>
            <person name="Brueggemann H."/>
            <person name="Liesegang H."/>
            <person name="Strittmatter A."/>
            <person name="Miethke M."/>
            <person name="Buckel W."/>
            <person name="Hinderberger J."/>
            <person name="Li F."/>
            <person name="Hagemeier C."/>
            <person name="Thauer R.K."/>
            <person name="Gottschalk G."/>
        </authorList>
    </citation>
    <scope>NUCLEOTIDE SEQUENCE [LARGE SCALE GENOMIC DNA]</scope>
    <source>
        <strain>ATCC 8527 / DSM 555 / NBRC 12016 / NCIMB 10680 / K1</strain>
    </source>
</reference>
<evidence type="ECO:0000255" key="1">
    <source>
        <dbReference type="HAMAP-Rule" id="MF_00658"/>
    </source>
</evidence>
<gene>
    <name evidence="1" type="primary">rlmH</name>
    <name type="ordered locus">CKL_2328</name>
</gene>
<keyword id="KW-0963">Cytoplasm</keyword>
<keyword id="KW-0489">Methyltransferase</keyword>
<keyword id="KW-1185">Reference proteome</keyword>
<keyword id="KW-0698">rRNA processing</keyword>
<keyword id="KW-0949">S-adenosyl-L-methionine</keyword>
<keyword id="KW-0808">Transferase</keyword>
<accession>A5MZP4</accession>
<comment type="function">
    <text evidence="1">Specifically methylates the pseudouridine at position 1915 (m3Psi1915) in 23S rRNA.</text>
</comment>
<comment type="catalytic activity">
    <reaction evidence="1">
        <text>pseudouridine(1915) in 23S rRNA + S-adenosyl-L-methionine = N(3)-methylpseudouridine(1915) in 23S rRNA + S-adenosyl-L-homocysteine + H(+)</text>
        <dbReference type="Rhea" id="RHEA:42752"/>
        <dbReference type="Rhea" id="RHEA-COMP:10221"/>
        <dbReference type="Rhea" id="RHEA-COMP:10222"/>
        <dbReference type="ChEBI" id="CHEBI:15378"/>
        <dbReference type="ChEBI" id="CHEBI:57856"/>
        <dbReference type="ChEBI" id="CHEBI:59789"/>
        <dbReference type="ChEBI" id="CHEBI:65314"/>
        <dbReference type="ChEBI" id="CHEBI:74486"/>
        <dbReference type="EC" id="2.1.1.177"/>
    </reaction>
</comment>
<comment type="subunit">
    <text evidence="1">Homodimer.</text>
</comment>
<comment type="subcellular location">
    <subcellularLocation>
        <location evidence="1">Cytoplasm</location>
    </subcellularLocation>
</comment>
<comment type="similarity">
    <text evidence="1">Belongs to the RNA methyltransferase RlmH family.</text>
</comment>
<organism>
    <name type="scientific">Clostridium kluyveri (strain ATCC 8527 / DSM 555 / NBRC 12016 / NCIMB 10680 / K1)</name>
    <dbReference type="NCBI Taxonomy" id="431943"/>
    <lineage>
        <taxon>Bacteria</taxon>
        <taxon>Bacillati</taxon>
        <taxon>Bacillota</taxon>
        <taxon>Clostridia</taxon>
        <taxon>Eubacteriales</taxon>
        <taxon>Clostridiaceae</taxon>
        <taxon>Clostridium</taxon>
    </lineage>
</organism>
<feature type="chain" id="PRO_1000082798" description="Ribosomal RNA large subunit methyltransferase H">
    <location>
        <begin position="1"/>
        <end position="159"/>
    </location>
</feature>
<feature type="binding site" evidence="1">
    <location>
        <position position="76"/>
    </location>
    <ligand>
        <name>S-adenosyl-L-methionine</name>
        <dbReference type="ChEBI" id="CHEBI:59789"/>
    </ligand>
</feature>
<feature type="binding site" evidence="1">
    <location>
        <position position="108"/>
    </location>
    <ligand>
        <name>S-adenosyl-L-methionine</name>
        <dbReference type="ChEBI" id="CHEBI:59789"/>
    </ligand>
</feature>
<feature type="binding site" evidence="1">
    <location>
        <begin position="127"/>
        <end position="132"/>
    </location>
    <ligand>
        <name>S-adenosyl-L-methionine</name>
        <dbReference type="ChEBI" id="CHEBI:59789"/>
    </ligand>
</feature>